<comment type="function">
    <text evidence="1">The glycine cleavage system catalyzes the degradation of glycine. The H protein shuttles the methylamine group of glycine from the P protein to the T protein.</text>
</comment>
<comment type="cofactor">
    <cofactor evidence="1">
        <name>(R)-lipoate</name>
        <dbReference type="ChEBI" id="CHEBI:83088"/>
    </cofactor>
    <text evidence="1">Binds 1 lipoyl cofactor covalently.</text>
</comment>
<comment type="subunit">
    <text evidence="1">The glycine cleavage system is composed of four proteins: P, T, L and H.</text>
</comment>
<comment type="similarity">
    <text evidence="1">Belongs to the GcvH family.</text>
</comment>
<organism>
    <name type="scientific">Haloarcula marismortui (strain ATCC 43049 / DSM 3752 / JCM 8966 / VKM B-1809)</name>
    <name type="common">Halobacterium marismortui</name>
    <dbReference type="NCBI Taxonomy" id="272569"/>
    <lineage>
        <taxon>Archaea</taxon>
        <taxon>Methanobacteriati</taxon>
        <taxon>Methanobacteriota</taxon>
        <taxon>Stenosarchaea group</taxon>
        <taxon>Halobacteria</taxon>
        <taxon>Halobacteriales</taxon>
        <taxon>Haloarculaceae</taxon>
        <taxon>Haloarcula</taxon>
    </lineage>
</organism>
<accession>Q5V231</accession>
<proteinExistence type="inferred from homology"/>
<gene>
    <name evidence="1" type="primary">gcvH</name>
    <name type="ordered locus">rrnAC1499</name>
</gene>
<sequence>MSFDVPDDLRYLESHEWVRVAGDTAEVGITAFAQDELGDVVFVELPDEGTELTAGEDFGVVESIKAVSDVYAPVSGTVTAVNDRLRDEPELLNEDPFGDGWMLTVEVDDKSETDDLLSPDAYRDQIE</sequence>
<feature type="chain" id="PRO_0000302471" description="Probable glycine cleavage system H protein">
    <location>
        <begin position="1"/>
        <end position="127"/>
    </location>
</feature>
<feature type="domain" description="Lipoyl-binding" evidence="2">
    <location>
        <begin position="24"/>
        <end position="106"/>
    </location>
</feature>
<feature type="modified residue" description="N6-lipoyllysine" evidence="1">
    <location>
        <position position="65"/>
    </location>
</feature>
<keyword id="KW-0450">Lipoyl</keyword>
<keyword id="KW-1185">Reference proteome</keyword>
<reference key="1">
    <citation type="journal article" date="2004" name="Genome Res.">
        <title>Genome sequence of Haloarcula marismortui: a halophilic archaeon from the Dead Sea.</title>
        <authorList>
            <person name="Baliga N.S."/>
            <person name="Bonneau R."/>
            <person name="Facciotti M.T."/>
            <person name="Pan M."/>
            <person name="Glusman G."/>
            <person name="Deutsch E.W."/>
            <person name="Shannon P."/>
            <person name="Chiu Y."/>
            <person name="Weng R.S."/>
            <person name="Gan R.R."/>
            <person name="Hung P."/>
            <person name="Date S.V."/>
            <person name="Marcotte E."/>
            <person name="Hood L."/>
            <person name="Ng W.V."/>
        </authorList>
    </citation>
    <scope>NUCLEOTIDE SEQUENCE [LARGE SCALE GENOMIC DNA]</scope>
    <source>
        <strain>ATCC 43049 / DSM 3752 / JCM 8966 / VKM B-1809</strain>
    </source>
</reference>
<protein>
    <recommendedName>
        <fullName evidence="1">Probable glycine cleavage system H protein</fullName>
    </recommendedName>
</protein>
<dbReference type="EMBL" id="AY596297">
    <property type="protein sequence ID" value="AAV46421.1"/>
    <property type="molecule type" value="Genomic_DNA"/>
</dbReference>
<dbReference type="RefSeq" id="WP_004957180.1">
    <property type="nucleotide sequence ID" value="NZ_CP039138.1"/>
</dbReference>
<dbReference type="SMR" id="Q5V231"/>
<dbReference type="STRING" id="272569.rrnAC1499"/>
<dbReference type="PaxDb" id="272569-rrnAC1499"/>
<dbReference type="EnsemblBacteria" id="AAV46421">
    <property type="protein sequence ID" value="AAV46421"/>
    <property type="gene ID" value="rrnAC1499"/>
</dbReference>
<dbReference type="GeneID" id="64821907"/>
<dbReference type="KEGG" id="hma:rrnAC1499"/>
<dbReference type="PATRIC" id="fig|272569.17.peg.2189"/>
<dbReference type="eggNOG" id="arCOG01303">
    <property type="taxonomic scope" value="Archaea"/>
</dbReference>
<dbReference type="HOGENOM" id="CLU_097408_2_0_2"/>
<dbReference type="Proteomes" id="UP000001169">
    <property type="component" value="Chromosome I"/>
</dbReference>
<dbReference type="GO" id="GO:0005737">
    <property type="term" value="C:cytoplasm"/>
    <property type="evidence" value="ECO:0007669"/>
    <property type="project" value="TreeGrafter"/>
</dbReference>
<dbReference type="GO" id="GO:0005960">
    <property type="term" value="C:glycine cleavage complex"/>
    <property type="evidence" value="ECO:0007669"/>
    <property type="project" value="InterPro"/>
</dbReference>
<dbReference type="GO" id="GO:0019464">
    <property type="term" value="P:glycine decarboxylation via glycine cleavage system"/>
    <property type="evidence" value="ECO:0007669"/>
    <property type="project" value="UniProtKB-UniRule"/>
</dbReference>
<dbReference type="CDD" id="cd06848">
    <property type="entry name" value="GCS_H"/>
    <property type="match status" value="1"/>
</dbReference>
<dbReference type="Gene3D" id="2.40.50.100">
    <property type="match status" value="1"/>
</dbReference>
<dbReference type="HAMAP" id="MF_00272">
    <property type="entry name" value="GcvH"/>
    <property type="match status" value="1"/>
</dbReference>
<dbReference type="InterPro" id="IPR003016">
    <property type="entry name" value="2-oxoA_DH_lipoyl-BS"/>
</dbReference>
<dbReference type="InterPro" id="IPR000089">
    <property type="entry name" value="Biotin_lipoyl"/>
</dbReference>
<dbReference type="InterPro" id="IPR002930">
    <property type="entry name" value="GCV_H"/>
</dbReference>
<dbReference type="InterPro" id="IPR033753">
    <property type="entry name" value="GCV_H/Fam206"/>
</dbReference>
<dbReference type="InterPro" id="IPR017453">
    <property type="entry name" value="GCV_H_sub"/>
</dbReference>
<dbReference type="InterPro" id="IPR011053">
    <property type="entry name" value="Single_hybrid_motif"/>
</dbReference>
<dbReference type="NCBIfam" id="TIGR00527">
    <property type="entry name" value="gcvH"/>
    <property type="match status" value="1"/>
</dbReference>
<dbReference type="NCBIfam" id="NF002270">
    <property type="entry name" value="PRK01202.1"/>
    <property type="match status" value="1"/>
</dbReference>
<dbReference type="PANTHER" id="PTHR11715">
    <property type="entry name" value="GLYCINE CLEAVAGE SYSTEM H PROTEIN"/>
    <property type="match status" value="1"/>
</dbReference>
<dbReference type="PANTHER" id="PTHR11715:SF3">
    <property type="entry name" value="GLYCINE CLEAVAGE SYSTEM H PROTEIN-RELATED"/>
    <property type="match status" value="1"/>
</dbReference>
<dbReference type="Pfam" id="PF01597">
    <property type="entry name" value="GCV_H"/>
    <property type="match status" value="1"/>
</dbReference>
<dbReference type="SUPFAM" id="SSF51230">
    <property type="entry name" value="Single hybrid motif"/>
    <property type="match status" value="1"/>
</dbReference>
<dbReference type="PROSITE" id="PS50968">
    <property type="entry name" value="BIOTINYL_LIPOYL"/>
    <property type="match status" value="1"/>
</dbReference>
<dbReference type="PROSITE" id="PS00189">
    <property type="entry name" value="LIPOYL"/>
    <property type="match status" value="1"/>
</dbReference>
<name>GCSH_HALMA</name>
<evidence type="ECO:0000255" key="1">
    <source>
        <dbReference type="HAMAP-Rule" id="MF_00272"/>
    </source>
</evidence>
<evidence type="ECO:0000255" key="2">
    <source>
        <dbReference type="PROSITE-ProRule" id="PRU01066"/>
    </source>
</evidence>